<sequence>MELLGQKVKEDGVVIDEKILKVDGFLNHQIDAKLMNEVGRTFYEQFKDKGITKILTIEASGIAPAIMAALHFDVPCLFAKKAKPSTLTDGYYETSIHSFTKNKTSTVIVSKEFLSEEDTVLIIDDFLANGDASLGLYDIAQQANAKTAGIGIVVEKSFQNGHQRLEEAGLTVSSLCKVASLEGNKVTLVVEE</sequence>
<comment type="function">
    <text evidence="1">Converts the preformed base xanthine, a product of nucleic acid breakdown, to xanthosine 5'-monophosphate (XMP), so it can be reused for RNA or DNA synthesis.</text>
</comment>
<comment type="catalytic activity">
    <reaction evidence="1">
        <text>XMP + diphosphate = xanthine + 5-phospho-alpha-D-ribose 1-diphosphate</text>
        <dbReference type="Rhea" id="RHEA:10800"/>
        <dbReference type="ChEBI" id="CHEBI:17712"/>
        <dbReference type="ChEBI" id="CHEBI:33019"/>
        <dbReference type="ChEBI" id="CHEBI:57464"/>
        <dbReference type="ChEBI" id="CHEBI:58017"/>
        <dbReference type="EC" id="2.4.2.22"/>
    </reaction>
</comment>
<comment type="pathway">
    <text evidence="1">Purine metabolism; XMP biosynthesis via salvage pathway; XMP from xanthine: step 1/1.</text>
</comment>
<comment type="subunit">
    <text evidence="1">Homodimer.</text>
</comment>
<comment type="subcellular location">
    <subcellularLocation>
        <location evidence="1">Cytoplasm</location>
    </subcellularLocation>
</comment>
<comment type="similarity">
    <text evidence="1">Belongs to the purine/pyrimidine phosphoribosyltransferase family. Xpt subfamily.</text>
</comment>
<proteinExistence type="inferred from homology"/>
<protein>
    <recommendedName>
        <fullName evidence="1">Xanthine phosphoribosyltransferase</fullName>
        <shortName evidence="1">XPRTase</shortName>
        <ecNumber evidence="1">2.4.2.22</ecNumber>
    </recommendedName>
</protein>
<organism>
    <name type="scientific">Staphylococcus aureus (strain JH1)</name>
    <dbReference type="NCBI Taxonomy" id="359787"/>
    <lineage>
        <taxon>Bacteria</taxon>
        <taxon>Bacillati</taxon>
        <taxon>Bacillota</taxon>
        <taxon>Bacilli</taxon>
        <taxon>Bacillales</taxon>
        <taxon>Staphylococcaceae</taxon>
        <taxon>Staphylococcus</taxon>
    </lineage>
</organism>
<dbReference type="EC" id="2.4.2.22" evidence="1"/>
<dbReference type="EMBL" id="CP000736">
    <property type="protein sequence ID" value="ABR51307.1"/>
    <property type="molecule type" value="Genomic_DNA"/>
</dbReference>
<dbReference type="SMR" id="A6TYN9"/>
<dbReference type="KEGG" id="sah:SaurJH1_0446"/>
<dbReference type="HOGENOM" id="CLU_099015_0_0_9"/>
<dbReference type="UniPathway" id="UPA00602">
    <property type="reaction ID" value="UER00658"/>
</dbReference>
<dbReference type="GO" id="GO:0005737">
    <property type="term" value="C:cytoplasm"/>
    <property type="evidence" value="ECO:0007669"/>
    <property type="project" value="UniProtKB-SubCell"/>
</dbReference>
<dbReference type="GO" id="GO:0000310">
    <property type="term" value="F:xanthine phosphoribosyltransferase activity"/>
    <property type="evidence" value="ECO:0007669"/>
    <property type="project" value="UniProtKB-UniRule"/>
</dbReference>
<dbReference type="GO" id="GO:0006166">
    <property type="term" value="P:purine ribonucleoside salvage"/>
    <property type="evidence" value="ECO:0007669"/>
    <property type="project" value="UniProtKB-KW"/>
</dbReference>
<dbReference type="GO" id="GO:0046110">
    <property type="term" value="P:xanthine metabolic process"/>
    <property type="evidence" value="ECO:0007669"/>
    <property type="project" value="InterPro"/>
</dbReference>
<dbReference type="GO" id="GO:0032265">
    <property type="term" value="P:XMP salvage"/>
    <property type="evidence" value="ECO:0007669"/>
    <property type="project" value="UniProtKB-UniRule"/>
</dbReference>
<dbReference type="CDD" id="cd06223">
    <property type="entry name" value="PRTases_typeI"/>
    <property type="match status" value="1"/>
</dbReference>
<dbReference type="Gene3D" id="3.40.50.2020">
    <property type="match status" value="1"/>
</dbReference>
<dbReference type="HAMAP" id="MF_01184">
    <property type="entry name" value="XPRTase"/>
    <property type="match status" value="1"/>
</dbReference>
<dbReference type="InterPro" id="IPR000836">
    <property type="entry name" value="PRibTrfase_dom"/>
</dbReference>
<dbReference type="InterPro" id="IPR029057">
    <property type="entry name" value="PRTase-like"/>
</dbReference>
<dbReference type="InterPro" id="IPR050118">
    <property type="entry name" value="Pur/Pyrimidine_PRTase"/>
</dbReference>
<dbReference type="InterPro" id="IPR010079">
    <property type="entry name" value="Xanthine_PRibTrfase"/>
</dbReference>
<dbReference type="NCBIfam" id="NF006671">
    <property type="entry name" value="PRK09219.1"/>
    <property type="match status" value="1"/>
</dbReference>
<dbReference type="NCBIfam" id="TIGR01744">
    <property type="entry name" value="XPRTase"/>
    <property type="match status" value="1"/>
</dbReference>
<dbReference type="PANTHER" id="PTHR43864">
    <property type="entry name" value="HYPOXANTHINE/GUANINE PHOSPHORIBOSYLTRANSFERASE"/>
    <property type="match status" value="1"/>
</dbReference>
<dbReference type="PANTHER" id="PTHR43864:SF1">
    <property type="entry name" value="XANTHINE PHOSPHORIBOSYLTRANSFERASE"/>
    <property type="match status" value="1"/>
</dbReference>
<dbReference type="SUPFAM" id="SSF53271">
    <property type="entry name" value="PRTase-like"/>
    <property type="match status" value="1"/>
</dbReference>
<evidence type="ECO:0000255" key="1">
    <source>
        <dbReference type="HAMAP-Rule" id="MF_01184"/>
    </source>
</evidence>
<keyword id="KW-0963">Cytoplasm</keyword>
<keyword id="KW-0328">Glycosyltransferase</keyword>
<keyword id="KW-0660">Purine salvage</keyword>
<keyword id="KW-0808">Transferase</keyword>
<accession>A6TYN9</accession>
<gene>
    <name evidence="1" type="primary">xpt</name>
    <name type="ordered locus">SaurJH1_0446</name>
</gene>
<reference key="1">
    <citation type="submission" date="2007-06" db="EMBL/GenBank/DDBJ databases">
        <title>Complete sequence of chromosome of Staphylococcus aureus subsp. aureus JH1.</title>
        <authorList>
            <consortium name="US DOE Joint Genome Institute"/>
            <person name="Copeland A."/>
            <person name="Lucas S."/>
            <person name="Lapidus A."/>
            <person name="Barry K."/>
            <person name="Detter J.C."/>
            <person name="Glavina del Rio T."/>
            <person name="Hammon N."/>
            <person name="Israni S."/>
            <person name="Dalin E."/>
            <person name="Tice H."/>
            <person name="Pitluck S."/>
            <person name="Chain P."/>
            <person name="Malfatti S."/>
            <person name="Shin M."/>
            <person name="Vergez L."/>
            <person name="Schmutz J."/>
            <person name="Larimer F."/>
            <person name="Land M."/>
            <person name="Hauser L."/>
            <person name="Kyrpides N."/>
            <person name="Ivanova N."/>
            <person name="Tomasz A."/>
            <person name="Richardson P."/>
        </authorList>
    </citation>
    <scope>NUCLEOTIDE SEQUENCE [LARGE SCALE GENOMIC DNA]</scope>
    <source>
        <strain>JH1</strain>
    </source>
</reference>
<name>XPT_STAA2</name>
<feature type="chain" id="PRO_0000339743" description="Xanthine phosphoribosyltransferase">
    <location>
        <begin position="1"/>
        <end position="192"/>
    </location>
</feature>
<feature type="binding site" evidence="1">
    <location>
        <position position="20"/>
    </location>
    <ligand>
        <name>xanthine</name>
        <dbReference type="ChEBI" id="CHEBI:17712"/>
    </ligand>
</feature>
<feature type="binding site" evidence="1">
    <location>
        <position position="27"/>
    </location>
    <ligand>
        <name>xanthine</name>
        <dbReference type="ChEBI" id="CHEBI:17712"/>
    </ligand>
</feature>
<feature type="binding site" evidence="1">
    <location>
        <begin position="128"/>
        <end position="132"/>
    </location>
    <ligand>
        <name>5-phospho-alpha-D-ribose 1-diphosphate</name>
        <dbReference type="ChEBI" id="CHEBI:58017"/>
    </ligand>
</feature>
<feature type="binding site" evidence="1">
    <location>
        <position position="156"/>
    </location>
    <ligand>
        <name>xanthine</name>
        <dbReference type="ChEBI" id="CHEBI:17712"/>
    </ligand>
</feature>